<dbReference type="EMBL" id="CT978603">
    <property type="protein sequence ID" value="CAK26928.1"/>
    <property type="molecule type" value="Genomic_DNA"/>
</dbReference>
<dbReference type="SMR" id="A5GPW9"/>
<dbReference type="STRING" id="316278.SynRCC307_0025"/>
<dbReference type="KEGG" id="syr:SynRCC307_0025"/>
<dbReference type="eggNOG" id="COG0718">
    <property type="taxonomic scope" value="Bacteria"/>
</dbReference>
<dbReference type="HOGENOM" id="CLU_140930_0_1_3"/>
<dbReference type="OrthoDB" id="487780at2"/>
<dbReference type="Proteomes" id="UP000001115">
    <property type="component" value="Chromosome"/>
</dbReference>
<dbReference type="GO" id="GO:0043590">
    <property type="term" value="C:bacterial nucleoid"/>
    <property type="evidence" value="ECO:0007669"/>
    <property type="project" value="UniProtKB-UniRule"/>
</dbReference>
<dbReference type="GO" id="GO:0005829">
    <property type="term" value="C:cytosol"/>
    <property type="evidence" value="ECO:0007669"/>
    <property type="project" value="TreeGrafter"/>
</dbReference>
<dbReference type="GO" id="GO:0003677">
    <property type="term" value="F:DNA binding"/>
    <property type="evidence" value="ECO:0007669"/>
    <property type="project" value="UniProtKB-UniRule"/>
</dbReference>
<dbReference type="Gene3D" id="3.30.1310.10">
    <property type="entry name" value="Nucleoid-associated protein YbaB-like domain"/>
    <property type="match status" value="1"/>
</dbReference>
<dbReference type="HAMAP" id="MF_00274">
    <property type="entry name" value="DNA_YbaB_EbfC"/>
    <property type="match status" value="1"/>
</dbReference>
<dbReference type="InterPro" id="IPR036894">
    <property type="entry name" value="YbaB-like_sf"/>
</dbReference>
<dbReference type="InterPro" id="IPR004401">
    <property type="entry name" value="YbaB/EbfC"/>
</dbReference>
<dbReference type="NCBIfam" id="TIGR00103">
    <property type="entry name" value="DNA_YbaB_EbfC"/>
    <property type="match status" value="1"/>
</dbReference>
<dbReference type="PANTHER" id="PTHR33449">
    <property type="entry name" value="NUCLEOID-ASSOCIATED PROTEIN YBAB"/>
    <property type="match status" value="1"/>
</dbReference>
<dbReference type="PANTHER" id="PTHR33449:SF1">
    <property type="entry name" value="NUCLEOID-ASSOCIATED PROTEIN YBAB"/>
    <property type="match status" value="1"/>
</dbReference>
<dbReference type="Pfam" id="PF02575">
    <property type="entry name" value="YbaB_DNA_bd"/>
    <property type="match status" value="1"/>
</dbReference>
<dbReference type="PIRSF" id="PIRSF004555">
    <property type="entry name" value="UCP004555"/>
    <property type="match status" value="1"/>
</dbReference>
<dbReference type="SUPFAM" id="SSF82607">
    <property type="entry name" value="YbaB-like"/>
    <property type="match status" value="1"/>
</dbReference>
<evidence type="ECO:0000255" key="1">
    <source>
        <dbReference type="HAMAP-Rule" id="MF_00274"/>
    </source>
</evidence>
<protein>
    <recommendedName>
        <fullName evidence="1">Nucleoid-associated protein SynRCC307_0025</fullName>
    </recommendedName>
</protein>
<accession>A5GPW9</accession>
<comment type="function">
    <text evidence="1">Binds to DNA and alters its conformation. May be involved in regulation of gene expression, nucleoid organization and DNA protection.</text>
</comment>
<comment type="subunit">
    <text evidence="1">Homodimer.</text>
</comment>
<comment type="subcellular location">
    <subcellularLocation>
        <location evidence="1">Cytoplasm</location>
        <location evidence="1">Nucleoid</location>
    </subcellularLocation>
</comment>
<comment type="similarity">
    <text evidence="1">Belongs to the YbaB/EbfC family.</text>
</comment>
<proteinExistence type="inferred from homology"/>
<name>Y025_SYNR3</name>
<reference key="1">
    <citation type="submission" date="2006-05" db="EMBL/GenBank/DDBJ databases">
        <authorList>
            <consortium name="Genoscope"/>
        </authorList>
    </citation>
    <scope>NUCLEOTIDE SEQUENCE [LARGE SCALE GENOMIC DNA]</scope>
    <source>
        <strain>RCC307</strain>
    </source>
</reference>
<gene>
    <name type="ordered locus">SynRCC307_0025</name>
</gene>
<sequence length="111" mass="11835">MAGFGLPNFGQLTEAFKKAQQIQQDAQKLQEELDAMEIEGSSVDGKASIWLSGNQQPLRVRLAPELLASGQEATEAATLEALQNAYAQSTATMKERMEELTGGLNLPGLGG</sequence>
<organism>
    <name type="scientific">Synechococcus sp. (strain RCC307)</name>
    <dbReference type="NCBI Taxonomy" id="316278"/>
    <lineage>
        <taxon>Bacteria</taxon>
        <taxon>Bacillati</taxon>
        <taxon>Cyanobacteriota</taxon>
        <taxon>Cyanophyceae</taxon>
        <taxon>Synechococcales</taxon>
        <taxon>Synechococcaceae</taxon>
        <taxon>Synechococcus</taxon>
    </lineage>
</organism>
<feature type="chain" id="PRO_1000003856" description="Nucleoid-associated protein SynRCC307_0025">
    <location>
        <begin position="1"/>
        <end position="111"/>
    </location>
</feature>
<keyword id="KW-0963">Cytoplasm</keyword>
<keyword id="KW-0238">DNA-binding</keyword>
<keyword id="KW-1185">Reference proteome</keyword>